<keyword id="KW-0010">Activator</keyword>
<keyword id="KW-0963">Cytoplasm</keyword>
<keyword id="KW-0238">DNA-binding</keyword>
<keyword id="KW-0479">Metal-binding</keyword>
<keyword id="KW-0539">Nucleus</keyword>
<keyword id="KW-0597">Phosphoprotein</keyword>
<keyword id="KW-0678">Repressor</keyword>
<keyword id="KW-0804">Transcription</keyword>
<keyword id="KW-0805">Transcription regulation</keyword>
<keyword id="KW-0862">Zinc</keyword>
<protein>
    <recommendedName>
        <fullName>Glucose transport transcription regulator RGT1</fullName>
    </recommendedName>
    <alternativeName>
        <fullName>Restores glucose transport protein 1</fullName>
    </alternativeName>
</protein>
<gene>
    <name type="primary">RGT1</name>
    <name type="ORF">C1Q_02022</name>
</gene>
<feature type="chain" id="PRO_0000408018" description="Glucose transport transcription regulator RGT1">
    <location>
        <begin position="1"/>
        <end position="1170"/>
    </location>
</feature>
<feature type="DNA-binding region" description="Zn(2)-C6 fungal-type" evidence="3">
    <location>
        <begin position="47"/>
        <end position="76"/>
    </location>
</feature>
<feature type="region of interest" description="Disordered" evidence="4">
    <location>
        <begin position="1"/>
        <end position="47"/>
    </location>
</feature>
<feature type="region of interest" description="Disordered" evidence="4">
    <location>
        <begin position="77"/>
        <end position="149"/>
    </location>
</feature>
<feature type="region of interest" description="Disordered" evidence="4">
    <location>
        <begin position="226"/>
        <end position="254"/>
    </location>
</feature>
<feature type="region of interest" description="Disordered" evidence="4">
    <location>
        <begin position="269"/>
        <end position="288"/>
    </location>
</feature>
<feature type="region of interest" description="Disordered" evidence="4">
    <location>
        <begin position="293"/>
        <end position="323"/>
    </location>
</feature>
<feature type="region of interest" description="Disordered" evidence="4">
    <location>
        <begin position="384"/>
        <end position="506"/>
    </location>
</feature>
<feature type="region of interest" description="Disordered" evidence="4">
    <location>
        <begin position="944"/>
        <end position="977"/>
    </location>
</feature>
<feature type="compositionally biased region" description="Polar residues" evidence="4">
    <location>
        <begin position="1"/>
        <end position="22"/>
    </location>
</feature>
<feature type="compositionally biased region" description="Basic and acidic residues" evidence="4">
    <location>
        <begin position="99"/>
        <end position="108"/>
    </location>
</feature>
<feature type="compositionally biased region" description="Low complexity" evidence="4">
    <location>
        <begin position="113"/>
        <end position="138"/>
    </location>
</feature>
<feature type="compositionally biased region" description="Polar residues" evidence="4">
    <location>
        <begin position="139"/>
        <end position="149"/>
    </location>
</feature>
<feature type="compositionally biased region" description="Low complexity" evidence="4">
    <location>
        <begin position="239"/>
        <end position="250"/>
    </location>
</feature>
<feature type="compositionally biased region" description="Basic and acidic residues" evidence="4">
    <location>
        <begin position="271"/>
        <end position="280"/>
    </location>
</feature>
<feature type="compositionally biased region" description="Low complexity" evidence="4">
    <location>
        <begin position="293"/>
        <end position="302"/>
    </location>
</feature>
<feature type="compositionally biased region" description="Low complexity" evidence="4">
    <location>
        <begin position="309"/>
        <end position="323"/>
    </location>
</feature>
<feature type="compositionally biased region" description="Low complexity" evidence="4">
    <location>
        <begin position="385"/>
        <end position="397"/>
    </location>
</feature>
<feature type="compositionally biased region" description="Polar residues" evidence="4">
    <location>
        <begin position="411"/>
        <end position="422"/>
    </location>
</feature>
<feature type="compositionally biased region" description="Low complexity" evidence="4">
    <location>
        <begin position="424"/>
        <end position="444"/>
    </location>
</feature>
<feature type="compositionally biased region" description="Polar residues" evidence="4">
    <location>
        <begin position="445"/>
        <end position="457"/>
    </location>
</feature>
<feature type="compositionally biased region" description="Basic residues" evidence="4">
    <location>
        <begin position="473"/>
        <end position="488"/>
    </location>
</feature>
<feature type="compositionally biased region" description="Polar residues" evidence="4">
    <location>
        <begin position="493"/>
        <end position="506"/>
    </location>
</feature>
<feature type="modified residue" description="Phosphoserine" evidence="2">
    <location>
        <position position="202"/>
    </location>
</feature>
<feature type="modified residue" description="Phosphoserine" evidence="2">
    <location>
        <position position="205"/>
    </location>
</feature>
<feature type="modified residue" description="Phosphoserine" evidence="2">
    <location>
        <position position="208"/>
    </location>
</feature>
<feature type="modified residue" description="Phosphoserine" evidence="2">
    <location>
        <position position="229"/>
    </location>
</feature>
<feature type="modified residue" description="Phosphoserine" evidence="2">
    <location>
        <position position="283"/>
    </location>
</feature>
<feature type="modified residue" description="Phosphoserine" evidence="2">
    <location>
        <position position="284"/>
    </location>
</feature>
<feature type="modified residue" description="Phosphoserine" evidence="2">
    <location>
        <position position="410"/>
    </location>
</feature>
<feature type="modified residue" description="Phosphoserine" evidence="2">
    <location>
        <position position="414"/>
    </location>
</feature>
<feature type="modified residue" description="Phosphoserine" evidence="2">
    <location>
        <position position="1130"/>
    </location>
</feature>
<proteinExistence type="inferred from homology"/>
<name>RGT1_YEAS2</name>
<sequence length="1170" mass="128269">MNELNTVSTNSSDSTKDGGTSNSPDDMDSAAAASHAIKKRTKASRACDQCRKKKIKCDYKDEKGVCSNCQRNGDRCSFDRVPLKRGPSKGYTRSTSHPRTNEIQDHNNSRSYNTFDNSNNTLNNNTGNSGDNGINSNTVPSTPSRSNSVLLPPLTQYIPQAGGIPPSFQNPAIQSTMPAGNIGQQQFWKVPYHEFQHQRKGSIDSLQSDISVRTLNPNEQLSYNTVQQSPITNKHTNDSGNANGSVTGSGSASGSGGYWSFIRTSGLLAPTDDHNGEQTRRSSSIPSLLRNTSNSLLLGGQPQLPPPQQQSQPQAHQQKLQQGQNLYSYSQFSQQQPYNPSISSFGQFAANGFHSRQGSVASEAMSPSAPAMFTSTSTNPVNVAQQTQRPQGQQVPQFSSELDGNKRRQSAPVSVTLSTDRLNGNENNNGEINNNNGSNNSGSSKDTSQHSQESVTTPVALEASSPGSTPQRSTKKRRKSYVSKKTKPKRDSSISITSKDSAHPMTTSSTIAYGQISDVDLIDTYYEFIHVGFPIIPLNKTTLTSDLLLVNTQPISNIHEVNSYVILWFRNSLELLVRVALKQKPGGKFFDNIVGVALSPSNDNNKAGFTTATARDDAEKTRRDSHNEVQDTLEVQSVFIAALNECFQKIVDIHPKFRENNDQISPKIKVIYLSTFILLNYILAFVGYDNSFVLGMSVTIFNEFKLYKLLLFPEPDINDVKPPVDEEVSTGNGNTKTSEFEIGSESAGHMNPSNSPNSMDENISHYSVLFKRLYVLLSVFDSLQSCAFGGPKLLNISIQGSTERFFSNDLGSKWCLEQSQLRLKSVLQSLKLGELMSELTRNRISMNGNRKPGFDITNSSSLLSEYVETQPLSVAQLFCKLLIGKHNFINCLLSLYDSEAGVYSDLTLDLSSKIADSLCSLISIILQVLTLILRLNPTNSIDFNYRPPNPPANNPTVQEGPSAMGSSPVAGNLSAAPPSEGNPDFYKKLLGLKQDTGTILSDLCRGIISPFAIAILHEVYNITELVKQMPTSLISIMMTATTTQNTQDTKKSQDLVMKLSNSMNEVVQITSVLTMIKPFKIFEHELNKPIMSLTGGLSSTTRNDVMWPKSGQGLRESSVMKTLLDERRTSGTQPTTAPVAAEEPRLENVALENFVSIGWKLLDDSELGWY</sequence>
<organism>
    <name type="scientific">Saccharomyces cerevisiae (strain JAY291)</name>
    <name type="common">Baker's yeast</name>
    <dbReference type="NCBI Taxonomy" id="574961"/>
    <lineage>
        <taxon>Eukaryota</taxon>
        <taxon>Fungi</taxon>
        <taxon>Dikarya</taxon>
        <taxon>Ascomycota</taxon>
        <taxon>Saccharomycotina</taxon>
        <taxon>Saccharomycetes</taxon>
        <taxon>Saccharomycetales</taxon>
        <taxon>Saccharomycetaceae</taxon>
        <taxon>Saccharomyces</taxon>
    </lineage>
</organism>
<comment type="function">
    <text evidence="1">Glucose-responsive transcription factor that regulates expression of several glucose transporter (HXT) genes in response to glucose. In the absence of glucose, it functions as a transcriptional repressor, whereas high concentrations of glucose cause it to function as a transcriptional activator. In cells growing on low levels of glucose, has a neutral role, neither repressing nor activating transcription. Binds the consensus binding site sequence 5'-CGGANNA-3', of which multiple copies are present in all HXT promoters regulated by RGT1 (By similarity).</text>
</comment>
<comment type="subcellular location">
    <subcellularLocation>
        <location evidence="3">Nucleus</location>
    </subcellularLocation>
    <subcellularLocation>
        <location evidence="1">Cytoplasm</location>
    </subcellularLocation>
</comment>
<comment type="PTM">
    <text evidence="1">Glucose-induced phosphorylation regulates the DNA-binding activity. Hyperphosphorylation in cells growing on high levels of glucose does prevents DNA-binding and dephosphorylation restores DNA-binding ability (By similarity).</text>
</comment>
<comment type="similarity">
    <text evidence="5">Belongs to the EDS1/RGT1 family.</text>
</comment>
<reference key="1">
    <citation type="journal article" date="2009" name="Genome Res.">
        <title>Genome structure of a Saccharomyces cerevisiae strain widely used in bioethanol production.</title>
        <authorList>
            <person name="Argueso J.L."/>
            <person name="Carazzolle M.F."/>
            <person name="Mieczkowski P.A."/>
            <person name="Duarte F.M."/>
            <person name="Netto O.V.C."/>
            <person name="Missawa S.K."/>
            <person name="Galzerani F."/>
            <person name="Costa G.G.L."/>
            <person name="Vidal R.O."/>
            <person name="Noronha M.F."/>
            <person name="Dominska M."/>
            <person name="Andrietta M.G.S."/>
            <person name="Andrietta S.R."/>
            <person name="Cunha A.F."/>
            <person name="Gomes L.H."/>
            <person name="Tavares F.C.A."/>
            <person name="Alcarde A.R."/>
            <person name="Dietrich F.S."/>
            <person name="McCusker J.H."/>
            <person name="Petes T.D."/>
            <person name="Pereira G.A.G."/>
        </authorList>
    </citation>
    <scope>NUCLEOTIDE SEQUENCE [LARGE SCALE GENOMIC DNA]</scope>
    <source>
        <strain>JAY291</strain>
    </source>
</reference>
<evidence type="ECO:0000250" key="1"/>
<evidence type="ECO:0000250" key="2">
    <source>
        <dbReference type="UniProtKB" id="P32862"/>
    </source>
</evidence>
<evidence type="ECO:0000255" key="3">
    <source>
        <dbReference type="PROSITE-ProRule" id="PRU00227"/>
    </source>
</evidence>
<evidence type="ECO:0000256" key="4">
    <source>
        <dbReference type="SAM" id="MobiDB-lite"/>
    </source>
</evidence>
<evidence type="ECO:0000305" key="5"/>
<dbReference type="EMBL" id="ACFL01000080">
    <property type="protein sequence ID" value="EEU07433.1"/>
    <property type="molecule type" value="Genomic_DNA"/>
</dbReference>
<dbReference type="OrthoDB" id="39552at4893"/>
<dbReference type="Proteomes" id="UP000008073">
    <property type="component" value="Unassembled WGS sequence"/>
</dbReference>
<dbReference type="GO" id="GO:0005737">
    <property type="term" value="C:cytoplasm"/>
    <property type="evidence" value="ECO:0007669"/>
    <property type="project" value="UniProtKB-SubCell"/>
</dbReference>
<dbReference type="GO" id="GO:0005634">
    <property type="term" value="C:nucleus"/>
    <property type="evidence" value="ECO:0007669"/>
    <property type="project" value="UniProtKB-SubCell"/>
</dbReference>
<dbReference type="GO" id="GO:0003677">
    <property type="term" value="F:DNA binding"/>
    <property type="evidence" value="ECO:0007669"/>
    <property type="project" value="UniProtKB-KW"/>
</dbReference>
<dbReference type="GO" id="GO:0000981">
    <property type="term" value="F:DNA-binding transcription factor activity, RNA polymerase II-specific"/>
    <property type="evidence" value="ECO:0007669"/>
    <property type="project" value="InterPro"/>
</dbReference>
<dbReference type="GO" id="GO:0008270">
    <property type="term" value="F:zinc ion binding"/>
    <property type="evidence" value="ECO:0007669"/>
    <property type="project" value="InterPro"/>
</dbReference>
<dbReference type="CDD" id="cd00067">
    <property type="entry name" value="GAL4"/>
    <property type="match status" value="1"/>
</dbReference>
<dbReference type="Gene3D" id="4.10.240.10">
    <property type="entry name" value="Zn(2)-C6 fungal-type DNA-binding domain"/>
    <property type="match status" value="1"/>
</dbReference>
<dbReference type="InterPro" id="IPR050797">
    <property type="entry name" value="Carb_Metab_Trans_Reg"/>
</dbReference>
<dbReference type="InterPro" id="IPR036864">
    <property type="entry name" value="Zn2-C6_fun-type_DNA-bd_sf"/>
</dbReference>
<dbReference type="InterPro" id="IPR001138">
    <property type="entry name" value="Zn2Cys6_DnaBD"/>
</dbReference>
<dbReference type="PANTHER" id="PTHR31668:SF26">
    <property type="entry name" value="GLUCOSE TRANSPORT TRANSCRIPTION REGULATOR RGT1-RELATED"/>
    <property type="match status" value="1"/>
</dbReference>
<dbReference type="PANTHER" id="PTHR31668">
    <property type="entry name" value="GLUCOSE TRANSPORT TRANSCRIPTION REGULATOR RGT1-RELATED-RELATED"/>
    <property type="match status" value="1"/>
</dbReference>
<dbReference type="Pfam" id="PF00172">
    <property type="entry name" value="Zn_clus"/>
    <property type="match status" value="1"/>
</dbReference>
<dbReference type="SMART" id="SM00066">
    <property type="entry name" value="GAL4"/>
    <property type="match status" value="1"/>
</dbReference>
<dbReference type="SUPFAM" id="SSF57701">
    <property type="entry name" value="Zn2/Cys6 DNA-binding domain"/>
    <property type="match status" value="1"/>
</dbReference>
<dbReference type="PROSITE" id="PS00463">
    <property type="entry name" value="ZN2_CY6_FUNGAL_1"/>
    <property type="match status" value="1"/>
</dbReference>
<dbReference type="PROSITE" id="PS50048">
    <property type="entry name" value="ZN2_CY6_FUNGAL_2"/>
    <property type="match status" value="1"/>
</dbReference>
<accession>C7GP35</accession>